<proteinExistence type="inferred from homology"/>
<evidence type="ECO:0000255" key="1"/>
<evidence type="ECO:0000256" key="2">
    <source>
        <dbReference type="SAM" id="MobiDB-lite"/>
    </source>
</evidence>
<evidence type="ECO:0000269" key="3">
    <source>
    </source>
</evidence>
<evidence type="ECO:0000305" key="4"/>
<comment type="function">
    <text evidence="3">Mediates both low-affinity uptake and efflux of sugar across the membrane.</text>
</comment>
<comment type="subcellular location">
    <subcellularLocation>
        <location evidence="3">Golgi apparatus membrane</location>
        <topology evidence="3">Multi-pass membrane protein</topology>
    </subcellularLocation>
    <subcellularLocation>
        <location evidence="3">Cell membrane</location>
        <topology evidence="3">Multi-pass membrane protein</topology>
    </subcellularLocation>
</comment>
<comment type="similarity">
    <text evidence="4">Belongs to the SWEET sugar transporter family.</text>
</comment>
<reference key="1">
    <citation type="journal article" date="1998" name="Science">
        <title>Genome sequence of the nematode C. elegans: a platform for investigating biology.</title>
        <authorList>
            <consortium name="The C. elegans sequencing consortium"/>
        </authorList>
    </citation>
    <scope>NUCLEOTIDE SEQUENCE [LARGE SCALE GENOMIC DNA]</scope>
    <source>
        <strain>Bristol N2</strain>
    </source>
</reference>
<reference key="2">
    <citation type="journal article" date="2010" name="Nature">
        <title>Sugar transporters for intercellular exchange and nutrition of pathogens.</title>
        <authorList>
            <person name="Chen L.-Q."/>
            <person name="Hou B.-H."/>
            <person name="Lalonde S."/>
            <person name="Takanaga H."/>
            <person name="Hartung M.L."/>
            <person name="Qu X.-Q."/>
            <person name="Guo W.-J."/>
            <person name="Kim J.-G."/>
            <person name="Underwood W."/>
            <person name="Chaudhuri B."/>
            <person name="Chermak D."/>
            <person name="Antony G."/>
            <person name="White F.F."/>
            <person name="Somerville S.C."/>
            <person name="Mudgett M.B."/>
            <person name="Frommer W.B."/>
        </authorList>
    </citation>
    <scope>FUNCTION</scope>
    <scope>SUBCELLULAR LOCATION</scope>
</reference>
<gene>
    <name type="primary">swt-1</name>
    <name type="ORF">K02D7.5</name>
</gene>
<name>SWET1_CAEEL</name>
<dbReference type="EMBL" id="FO081176">
    <property type="protein sequence ID" value="CCD69688.1"/>
    <property type="molecule type" value="Genomic_DNA"/>
</dbReference>
<dbReference type="PIR" id="T32982">
    <property type="entry name" value="T32982"/>
</dbReference>
<dbReference type="RefSeq" id="NP_499901.1">
    <property type="nucleotide sequence ID" value="NM_067500.7"/>
</dbReference>
<dbReference type="SMR" id="O45102"/>
<dbReference type="FunCoup" id="O45102">
    <property type="interactions" value="614"/>
</dbReference>
<dbReference type="STRING" id="6239.K02D7.5.1"/>
<dbReference type="TCDB" id="2.A.123.1.10">
    <property type="family name" value="the sweet, pq-loop, saliva, mtn3 (sweet) family"/>
</dbReference>
<dbReference type="PaxDb" id="6239-K02D7.5"/>
<dbReference type="EnsemblMetazoa" id="K02D7.5.1">
    <property type="protein sequence ID" value="K02D7.5.1"/>
    <property type="gene ID" value="WBGene00019300"/>
</dbReference>
<dbReference type="GeneID" id="186875"/>
<dbReference type="KEGG" id="cel:CELE_K02D7.5"/>
<dbReference type="UCSC" id="K02D7.5">
    <property type="organism name" value="c. elegans"/>
</dbReference>
<dbReference type="AGR" id="WB:WBGene00019300"/>
<dbReference type="CTD" id="186875"/>
<dbReference type="WormBase" id="K02D7.5">
    <property type="protein sequence ID" value="CE17998"/>
    <property type="gene ID" value="WBGene00019300"/>
    <property type="gene designation" value="swt-1"/>
</dbReference>
<dbReference type="eggNOG" id="KOG1623">
    <property type="taxonomic scope" value="Eukaryota"/>
</dbReference>
<dbReference type="GeneTree" id="ENSGT00390000007801"/>
<dbReference type="HOGENOM" id="CLU_048643_3_1_1"/>
<dbReference type="InParanoid" id="O45102"/>
<dbReference type="OMA" id="MIFCNCY"/>
<dbReference type="OrthoDB" id="409725at2759"/>
<dbReference type="PhylomeDB" id="O45102"/>
<dbReference type="PRO" id="PR:O45102"/>
<dbReference type="Proteomes" id="UP000001940">
    <property type="component" value="Chromosome IV"/>
</dbReference>
<dbReference type="Bgee" id="WBGene00019300">
    <property type="expression patterns" value="Expressed in larva and 3 other cell types or tissues"/>
</dbReference>
<dbReference type="GO" id="GO:0005794">
    <property type="term" value="C:Golgi apparatus"/>
    <property type="evidence" value="ECO:0000314"/>
    <property type="project" value="UniProtKB"/>
</dbReference>
<dbReference type="GO" id="GO:0000139">
    <property type="term" value="C:Golgi membrane"/>
    <property type="evidence" value="ECO:0007669"/>
    <property type="project" value="UniProtKB-SubCell"/>
</dbReference>
<dbReference type="GO" id="GO:0016020">
    <property type="term" value="C:membrane"/>
    <property type="evidence" value="ECO:0000318"/>
    <property type="project" value="GO_Central"/>
</dbReference>
<dbReference type="GO" id="GO:0005886">
    <property type="term" value="C:plasma membrane"/>
    <property type="evidence" value="ECO:0000314"/>
    <property type="project" value="UniProtKB"/>
</dbReference>
<dbReference type="GO" id="GO:0051119">
    <property type="term" value="F:sugar transmembrane transporter activity"/>
    <property type="evidence" value="ECO:0000314"/>
    <property type="project" value="UniProtKB"/>
</dbReference>
<dbReference type="GO" id="GO:0008643">
    <property type="term" value="P:carbohydrate transport"/>
    <property type="evidence" value="ECO:0000250"/>
    <property type="project" value="WormBase"/>
</dbReference>
<dbReference type="FunFam" id="1.20.1280.290:FF:000004">
    <property type="entry name" value="Sugar transporter SWEET"/>
    <property type="match status" value="1"/>
</dbReference>
<dbReference type="FunFam" id="1.20.1280.290:FF:000010">
    <property type="entry name" value="Sugar transporter SWEET"/>
    <property type="match status" value="1"/>
</dbReference>
<dbReference type="Gene3D" id="1.20.1280.290">
    <property type="match status" value="2"/>
</dbReference>
<dbReference type="InterPro" id="IPR047664">
    <property type="entry name" value="SWEET"/>
</dbReference>
<dbReference type="InterPro" id="IPR004316">
    <property type="entry name" value="SWEET_rpt"/>
</dbReference>
<dbReference type="PANTHER" id="PTHR10791">
    <property type="entry name" value="RAG1-ACTIVATING PROTEIN 1"/>
    <property type="match status" value="1"/>
</dbReference>
<dbReference type="PANTHER" id="PTHR10791:SF43">
    <property type="entry name" value="SUGAR TRANSPORTER SWEET-RELATED"/>
    <property type="match status" value="1"/>
</dbReference>
<dbReference type="Pfam" id="PF03083">
    <property type="entry name" value="MtN3_slv"/>
    <property type="match status" value="2"/>
</dbReference>
<organism>
    <name type="scientific">Caenorhabditis elegans</name>
    <dbReference type="NCBI Taxonomy" id="6239"/>
    <lineage>
        <taxon>Eukaryota</taxon>
        <taxon>Metazoa</taxon>
        <taxon>Ecdysozoa</taxon>
        <taxon>Nematoda</taxon>
        <taxon>Chromadorea</taxon>
        <taxon>Rhabditida</taxon>
        <taxon>Rhabditina</taxon>
        <taxon>Rhabditomorpha</taxon>
        <taxon>Rhabditoidea</taxon>
        <taxon>Rhabditidae</taxon>
        <taxon>Peloderinae</taxon>
        <taxon>Caenorhabditis</taxon>
    </lineage>
</organism>
<keyword id="KW-1003">Cell membrane</keyword>
<keyword id="KW-0333">Golgi apparatus</keyword>
<keyword id="KW-0472">Membrane</keyword>
<keyword id="KW-1185">Reference proteome</keyword>
<keyword id="KW-0677">Repeat</keyword>
<keyword id="KW-0762">Sugar transport</keyword>
<keyword id="KW-0812">Transmembrane</keyword>
<keyword id="KW-1133">Transmembrane helix</keyword>
<keyword id="KW-0813">Transport</keyword>
<accession>O45102</accession>
<protein>
    <recommendedName>
        <fullName>Sugar transporter SWEET1</fullName>
        <shortName>CeSWEET1</shortName>
    </recommendedName>
</protein>
<feature type="chain" id="PRO_0000345125" description="Sugar transporter SWEET1">
    <location>
        <begin position="1"/>
        <end position="299"/>
    </location>
</feature>
<feature type="transmembrane region" description="Helical; Name=1" evidence="1">
    <location>
        <begin position="8"/>
        <end position="28"/>
    </location>
</feature>
<feature type="transmembrane region" description="Helical; Name=2" evidence="1">
    <location>
        <begin position="36"/>
        <end position="56"/>
    </location>
</feature>
<feature type="transmembrane region" description="Helical; Name=3" evidence="1">
    <location>
        <begin position="67"/>
        <end position="87"/>
    </location>
</feature>
<feature type="transmembrane region" description="Helical; Name=4" evidence="1">
    <location>
        <begin position="95"/>
        <end position="115"/>
    </location>
</feature>
<feature type="transmembrane region" description="Helical; Name=5" evidence="1">
    <location>
        <begin position="124"/>
        <end position="144"/>
    </location>
</feature>
<feature type="transmembrane region" description="Helical; Name=6" evidence="1">
    <location>
        <begin position="155"/>
        <end position="175"/>
    </location>
</feature>
<feature type="transmembrane region" description="Helical; Name=7" evidence="1">
    <location>
        <begin position="180"/>
        <end position="200"/>
    </location>
</feature>
<feature type="domain" description="MtN3/slv 1">
    <location>
        <begin position="7"/>
        <end position="91"/>
    </location>
</feature>
<feature type="domain" description="MtN3/slv 2">
    <location>
        <begin position="121"/>
        <end position="205"/>
    </location>
</feature>
<feature type="region of interest" description="Disordered" evidence="2">
    <location>
        <begin position="230"/>
        <end position="299"/>
    </location>
</feature>
<feature type="compositionally biased region" description="Basic and acidic residues" evidence="2">
    <location>
        <begin position="247"/>
        <end position="261"/>
    </location>
</feature>
<feature type="compositionally biased region" description="Low complexity" evidence="2">
    <location>
        <begin position="276"/>
        <end position="299"/>
    </location>
</feature>
<sequence>MLEVVLQVLSISAITTTIALFFCGIPICMQIRRQGAVGDISGVPFLMGVLGGSFWLRYGLLKMDYVMIIVNVVGVACMAFYCVFFLIYSLPKKTFTCQLILVTSTIGGMVLWIALKPNLDYLGVICMTFNIMNFGAPLAGLGVVLKNREVSTLPLPMCVANFLVSSQWCLYGNLVSDIYIIIPNGIGMFLAIVQLALFVVLPIRENEKSPLEKLASWFTGRDSKVKDLERGDCIVSSPPSSPQKVPNETRSDVEDKFDKLMAETSSTIPSDSRRGSMGSPPSYKSRSSSDPDLSSIQSP</sequence>